<keyword id="KW-0225">Disease variant</keyword>
<keyword id="KW-0343">GTPase activation</keyword>
<keyword id="KW-0472">Membrane</keyword>
<keyword id="KW-1185">Reference proteome</keyword>
<keyword id="KW-0812">Transmembrane</keyword>
<keyword id="KW-1133">Transmembrane helix</keyword>
<evidence type="ECO:0000250" key="1">
    <source>
        <dbReference type="UniProtKB" id="Q96BZ9"/>
    </source>
</evidence>
<evidence type="ECO:0000255" key="2"/>
<evidence type="ECO:0000255" key="3">
    <source>
        <dbReference type="PROSITE-ProRule" id="PRU00163"/>
    </source>
</evidence>
<evidence type="ECO:0000256" key="4">
    <source>
        <dbReference type="SAM" id="MobiDB-lite"/>
    </source>
</evidence>
<evidence type="ECO:0000269" key="5">
    <source>
    </source>
</evidence>
<evidence type="ECO:0000305" key="6"/>
<evidence type="ECO:0000312" key="7">
    <source>
        <dbReference type="MGI" id="MGI:1914481"/>
    </source>
</evidence>
<feature type="chain" id="PRO_0000208049" description="TBC1 domain family member 20">
    <location>
        <begin position="1"/>
        <end position="402"/>
    </location>
</feature>
<feature type="transmembrane region" description="Helical" evidence="2">
    <location>
        <begin position="237"/>
        <end position="257"/>
    </location>
</feature>
<feature type="transmembrane region" description="Helical" evidence="2">
    <location>
        <begin position="366"/>
        <end position="386"/>
    </location>
</feature>
<feature type="domain" description="Rab-GAP TBC" evidence="3">
    <location>
        <begin position="59"/>
        <end position="245"/>
    </location>
</feature>
<feature type="region of interest" description="Disordered" evidence="4">
    <location>
        <begin position="1"/>
        <end position="27"/>
    </location>
</feature>
<feature type="compositionally biased region" description="Basic and acidic residues" evidence="4">
    <location>
        <begin position="14"/>
        <end position="26"/>
    </location>
</feature>
<feature type="site" description="Arginine finger" evidence="1">
    <location>
        <position position="104"/>
    </location>
</feature>
<feature type="site" description="Glutamine finger" evidence="1">
    <location>
        <position position="143"/>
    </location>
</feature>
<feature type="sequence variant" description="In bs.">
    <original>FRHVV</original>
    <variation>M</variation>
    <location>
        <begin position="231"/>
        <end position="235"/>
    </location>
</feature>
<feature type="sequence conflict" description="In Ref. 2; AAH40089." evidence="6" ref="2">
    <original>L</original>
    <variation>P</variation>
    <location>
        <position position="297"/>
    </location>
</feature>
<accession>Q9D9I4</accession>
<accession>Q3TYW9</accession>
<accession>Q99LW2</accession>
<sequence>MALRPSKGDGSAGRWDRGAGKADFNAKRKKKVAEIHQALNSDPIDLAALRRMAISEGGLLTDEIRCQVWPKLLNVNTSEPPPVSRKDLRDMSKDYQQVLLDVRRSLRRFPPGMPDEQREGLQEELIDIILLVLDRNPQLHYYQGYHDIVVTFLLVVGERLATSLVEKLSTHHLRDFMDPTMDNTKHILNYLMPIIDQVSPELHDFMQSAEVGTIFALSWLITWFGHVLMDFRHVVRLYDFFLACHPLMPIYFAAVIVLYREQEVLDCDCDMASVHHLLSQIPQDLPYETLISRAGDLFVQFPPSELAREAAAQQEAERTAASTFKDFELASTQQRPDMVLRQRFRGLLRPEARTKDVLTKPRTNRFVKLAVMGLTVALGAAALAVVKSALEWAPKFQLQLFP</sequence>
<name>TBC20_MOUSE</name>
<organism>
    <name type="scientific">Mus musculus</name>
    <name type="common">Mouse</name>
    <dbReference type="NCBI Taxonomy" id="10090"/>
    <lineage>
        <taxon>Eukaryota</taxon>
        <taxon>Metazoa</taxon>
        <taxon>Chordata</taxon>
        <taxon>Craniata</taxon>
        <taxon>Vertebrata</taxon>
        <taxon>Euteleostomi</taxon>
        <taxon>Mammalia</taxon>
        <taxon>Eutheria</taxon>
        <taxon>Euarchontoglires</taxon>
        <taxon>Glires</taxon>
        <taxon>Rodentia</taxon>
        <taxon>Myomorpha</taxon>
        <taxon>Muroidea</taxon>
        <taxon>Muridae</taxon>
        <taxon>Murinae</taxon>
        <taxon>Mus</taxon>
        <taxon>Mus</taxon>
    </lineage>
</organism>
<protein>
    <recommendedName>
        <fullName>TBC1 domain family member 20</fullName>
    </recommendedName>
</protein>
<reference key="1">
    <citation type="journal article" date="2005" name="Science">
        <title>The transcriptional landscape of the mammalian genome.</title>
        <authorList>
            <person name="Carninci P."/>
            <person name="Kasukawa T."/>
            <person name="Katayama S."/>
            <person name="Gough J."/>
            <person name="Frith M.C."/>
            <person name="Maeda N."/>
            <person name="Oyama R."/>
            <person name="Ravasi T."/>
            <person name="Lenhard B."/>
            <person name="Wells C."/>
            <person name="Kodzius R."/>
            <person name="Shimokawa K."/>
            <person name="Bajic V.B."/>
            <person name="Brenner S.E."/>
            <person name="Batalov S."/>
            <person name="Forrest A.R."/>
            <person name="Zavolan M."/>
            <person name="Davis M.J."/>
            <person name="Wilming L.G."/>
            <person name="Aidinis V."/>
            <person name="Allen J.E."/>
            <person name="Ambesi-Impiombato A."/>
            <person name="Apweiler R."/>
            <person name="Aturaliya R.N."/>
            <person name="Bailey T.L."/>
            <person name="Bansal M."/>
            <person name="Baxter L."/>
            <person name="Beisel K.W."/>
            <person name="Bersano T."/>
            <person name="Bono H."/>
            <person name="Chalk A.M."/>
            <person name="Chiu K.P."/>
            <person name="Choudhary V."/>
            <person name="Christoffels A."/>
            <person name="Clutterbuck D.R."/>
            <person name="Crowe M.L."/>
            <person name="Dalla E."/>
            <person name="Dalrymple B.P."/>
            <person name="de Bono B."/>
            <person name="Della Gatta G."/>
            <person name="di Bernardo D."/>
            <person name="Down T."/>
            <person name="Engstrom P."/>
            <person name="Fagiolini M."/>
            <person name="Faulkner G."/>
            <person name="Fletcher C.F."/>
            <person name="Fukushima T."/>
            <person name="Furuno M."/>
            <person name="Futaki S."/>
            <person name="Gariboldi M."/>
            <person name="Georgii-Hemming P."/>
            <person name="Gingeras T.R."/>
            <person name="Gojobori T."/>
            <person name="Green R.E."/>
            <person name="Gustincich S."/>
            <person name="Harbers M."/>
            <person name="Hayashi Y."/>
            <person name="Hensch T.K."/>
            <person name="Hirokawa N."/>
            <person name="Hill D."/>
            <person name="Huminiecki L."/>
            <person name="Iacono M."/>
            <person name="Ikeo K."/>
            <person name="Iwama A."/>
            <person name="Ishikawa T."/>
            <person name="Jakt M."/>
            <person name="Kanapin A."/>
            <person name="Katoh M."/>
            <person name="Kawasawa Y."/>
            <person name="Kelso J."/>
            <person name="Kitamura H."/>
            <person name="Kitano H."/>
            <person name="Kollias G."/>
            <person name="Krishnan S.P."/>
            <person name="Kruger A."/>
            <person name="Kummerfeld S.K."/>
            <person name="Kurochkin I.V."/>
            <person name="Lareau L.F."/>
            <person name="Lazarevic D."/>
            <person name="Lipovich L."/>
            <person name="Liu J."/>
            <person name="Liuni S."/>
            <person name="McWilliam S."/>
            <person name="Madan Babu M."/>
            <person name="Madera M."/>
            <person name="Marchionni L."/>
            <person name="Matsuda H."/>
            <person name="Matsuzawa S."/>
            <person name="Miki H."/>
            <person name="Mignone F."/>
            <person name="Miyake S."/>
            <person name="Morris K."/>
            <person name="Mottagui-Tabar S."/>
            <person name="Mulder N."/>
            <person name="Nakano N."/>
            <person name="Nakauchi H."/>
            <person name="Ng P."/>
            <person name="Nilsson R."/>
            <person name="Nishiguchi S."/>
            <person name="Nishikawa S."/>
            <person name="Nori F."/>
            <person name="Ohara O."/>
            <person name="Okazaki Y."/>
            <person name="Orlando V."/>
            <person name="Pang K.C."/>
            <person name="Pavan W.J."/>
            <person name="Pavesi G."/>
            <person name="Pesole G."/>
            <person name="Petrovsky N."/>
            <person name="Piazza S."/>
            <person name="Reed J."/>
            <person name="Reid J.F."/>
            <person name="Ring B.Z."/>
            <person name="Ringwald M."/>
            <person name="Rost B."/>
            <person name="Ruan Y."/>
            <person name="Salzberg S.L."/>
            <person name="Sandelin A."/>
            <person name="Schneider C."/>
            <person name="Schoenbach C."/>
            <person name="Sekiguchi K."/>
            <person name="Semple C.A."/>
            <person name="Seno S."/>
            <person name="Sessa L."/>
            <person name="Sheng Y."/>
            <person name="Shibata Y."/>
            <person name="Shimada H."/>
            <person name="Shimada K."/>
            <person name="Silva D."/>
            <person name="Sinclair B."/>
            <person name="Sperling S."/>
            <person name="Stupka E."/>
            <person name="Sugiura K."/>
            <person name="Sultana R."/>
            <person name="Takenaka Y."/>
            <person name="Taki K."/>
            <person name="Tammoja K."/>
            <person name="Tan S.L."/>
            <person name="Tang S."/>
            <person name="Taylor M.S."/>
            <person name="Tegner J."/>
            <person name="Teichmann S.A."/>
            <person name="Ueda H.R."/>
            <person name="van Nimwegen E."/>
            <person name="Verardo R."/>
            <person name="Wei C.L."/>
            <person name="Yagi K."/>
            <person name="Yamanishi H."/>
            <person name="Zabarovsky E."/>
            <person name="Zhu S."/>
            <person name="Zimmer A."/>
            <person name="Hide W."/>
            <person name="Bult C."/>
            <person name="Grimmond S.M."/>
            <person name="Teasdale R.D."/>
            <person name="Liu E.T."/>
            <person name="Brusic V."/>
            <person name="Quackenbush J."/>
            <person name="Wahlestedt C."/>
            <person name="Mattick J.S."/>
            <person name="Hume D.A."/>
            <person name="Kai C."/>
            <person name="Sasaki D."/>
            <person name="Tomaru Y."/>
            <person name="Fukuda S."/>
            <person name="Kanamori-Katayama M."/>
            <person name="Suzuki M."/>
            <person name="Aoki J."/>
            <person name="Arakawa T."/>
            <person name="Iida J."/>
            <person name="Imamura K."/>
            <person name="Itoh M."/>
            <person name="Kato T."/>
            <person name="Kawaji H."/>
            <person name="Kawagashira N."/>
            <person name="Kawashima T."/>
            <person name="Kojima M."/>
            <person name="Kondo S."/>
            <person name="Konno H."/>
            <person name="Nakano K."/>
            <person name="Ninomiya N."/>
            <person name="Nishio T."/>
            <person name="Okada M."/>
            <person name="Plessy C."/>
            <person name="Shibata K."/>
            <person name="Shiraki T."/>
            <person name="Suzuki S."/>
            <person name="Tagami M."/>
            <person name="Waki K."/>
            <person name="Watahiki A."/>
            <person name="Okamura-Oho Y."/>
            <person name="Suzuki H."/>
            <person name="Kawai J."/>
            <person name="Hayashizaki Y."/>
        </authorList>
    </citation>
    <scope>NUCLEOTIDE SEQUENCE [LARGE SCALE MRNA]</scope>
    <source>
        <strain>C57BL/6J</strain>
        <tissue>Embryo</tissue>
        <tissue>Inner ear</tissue>
        <tissue>Testis</tissue>
    </source>
</reference>
<reference key="2">
    <citation type="journal article" date="2004" name="Genome Res.">
        <title>The status, quality, and expansion of the NIH full-length cDNA project: the Mammalian Gene Collection (MGC).</title>
        <authorList>
            <consortium name="The MGC Project Team"/>
        </authorList>
    </citation>
    <scope>NUCLEOTIDE SEQUENCE [LARGE SCALE MRNA]</scope>
    <source>
        <strain>Czech II</strain>
        <tissue>Mammary tumor</tissue>
    </source>
</reference>
<reference key="3">
    <citation type="journal article" date="2010" name="Cell">
        <title>A tissue-specific atlas of mouse protein phosphorylation and expression.</title>
        <authorList>
            <person name="Huttlin E.L."/>
            <person name="Jedrychowski M.P."/>
            <person name="Elias J.E."/>
            <person name="Goswami T."/>
            <person name="Rad R."/>
            <person name="Beausoleil S.A."/>
            <person name="Villen J."/>
            <person name="Haas W."/>
            <person name="Sowa M.E."/>
            <person name="Gygi S.P."/>
        </authorList>
    </citation>
    <scope>IDENTIFICATION BY MASS SPECTROMETRY [LARGE SCALE ANALYSIS]</scope>
    <source>
        <tissue>Testis</tissue>
    </source>
</reference>
<reference key="4">
    <citation type="journal article" date="2015" name="Open Biol.">
        <title>Warburg Micro syndrome is caused by RAB18 deficiency or dysregulation.</title>
        <authorList>
            <person name="Handley M.T."/>
            <person name="Carpanini S.M."/>
            <person name="Mali G.R."/>
            <person name="Sidjanin D.J."/>
            <person name="Aligianis I.A."/>
            <person name="Jackson I.J."/>
            <person name="FitzPatrick D.R."/>
        </authorList>
    </citation>
    <scope>FUNCTION</scope>
</reference>
<reference key="5">
    <citation type="journal article" date="2013" name="Am. J. Hum. Genet.">
        <title>Loss-of-function mutations in TBC1D20 cause cataracts and male infertility in blind sterile mice and Warburg micro syndrome in humans.</title>
        <authorList>
            <person name="Liegel R.P."/>
            <person name="Handley M.T."/>
            <person name="Ronchetti A."/>
            <person name="Brown S."/>
            <person name="Langemeyer L."/>
            <person name="Linford A."/>
            <person name="Chang B."/>
            <person name="Morris-Rosendahl D.J."/>
            <person name="Carpanini S."/>
            <person name="Posmyk R."/>
            <person name="Harthill V."/>
            <person name="Sheridan E."/>
            <person name="Abdel-Salam G.M."/>
            <person name="Terhal P.A."/>
            <person name="Faravelli F."/>
            <person name="Accorsi P."/>
            <person name="Giordano L."/>
            <person name="Pinelli L."/>
            <person name="Hartmann B."/>
            <person name="Ebert A.D."/>
            <person name="Barr F.A."/>
            <person name="Aligianis I.A."/>
            <person name="Sidjanin D.J."/>
        </authorList>
    </citation>
    <scope>VARIANT BS 231-PHE--VAL-235 DELINS MET</scope>
</reference>
<comment type="function">
    <text evidence="1 5">GTPase-activating protein specific for Rab1 and Rab2 small GTPase families for which it can accelerate the intrinsic GTP hydrolysis rate by more than five orders of magnitude (By similarity). Also shows GAP activity for RAB18 GTPase (PubMed:26063829). Promotes RAB18 dissociation from the endoplasmic reticulum (ER) membrane into the cytosol, probably through stimulating RAB18 GTP-hydrolysis (PubMed:26063829). Involved in maintaining endoplasmic reticulum structure (By similarity).</text>
</comment>
<comment type="subcellular location">
    <subcellularLocation>
        <location evidence="6">Membrane</location>
        <topology evidence="6">Multi-pass membrane protein</topology>
    </subcellularLocation>
</comment>
<comment type="domain">
    <text evidence="1">The arginine and glutamine fingers are critical for the GTPase-activating mechanism, they pull out Rab's 'switch 2' glutamine and insert in Rab's active site.</text>
</comment>
<comment type="disease">
    <text>Defects in Tbc1d20 are the cause of spontaneous autosomal recessive blind sterile (bs) phenotype. Bs animals exhibit embryonic non-progressive nuclear cataracts and spermatid abnormalities associated with male infertility.</text>
</comment>
<gene>
    <name evidence="7" type="primary">Tbc1d20</name>
</gene>
<proteinExistence type="evidence at protein level"/>
<dbReference type="EMBL" id="AK006877">
    <property type="protein sequence ID" value="BAB24777.1"/>
    <property type="molecule type" value="mRNA"/>
</dbReference>
<dbReference type="EMBL" id="AK076124">
    <property type="protein sequence ID" value="BAC36202.1"/>
    <property type="molecule type" value="mRNA"/>
</dbReference>
<dbReference type="EMBL" id="AK158274">
    <property type="protein sequence ID" value="BAE34442.1"/>
    <property type="molecule type" value="mRNA"/>
</dbReference>
<dbReference type="EMBL" id="BC002196">
    <property type="protein sequence ID" value="AAH02196.1"/>
    <property type="molecule type" value="mRNA"/>
</dbReference>
<dbReference type="EMBL" id="BC040089">
    <property type="protein sequence ID" value="AAH40089.1"/>
    <property type="molecule type" value="mRNA"/>
</dbReference>
<dbReference type="CCDS" id="CCDS16880.1"/>
<dbReference type="RefSeq" id="NP_077158.1">
    <property type="nucleotide sequence ID" value="NM_024196.4"/>
</dbReference>
<dbReference type="SMR" id="Q9D9I4"/>
<dbReference type="BioGRID" id="212035">
    <property type="interactions" value="1"/>
</dbReference>
<dbReference type="FunCoup" id="Q9D9I4">
    <property type="interactions" value="3055"/>
</dbReference>
<dbReference type="STRING" id="10090.ENSMUSP00000028963"/>
<dbReference type="GlyGen" id="Q9D9I4">
    <property type="glycosylation" value="1 site, 1 N-linked glycan (1 site)"/>
</dbReference>
<dbReference type="iPTMnet" id="Q9D9I4"/>
<dbReference type="PhosphoSitePlus" id="Q9D9I4"/>
<dbReference type="jPOST" id="Q9D9I4"/>
<dbReference type="PaxDb" id="10090-ENSMUSP00000028963"/>
<dbReference type="ProteomicsDB" id="263074"/>
<dbReference type="Pumba" id="Q9D9I4"/>
<dbReference type="Antibodypedia" id="22961">
    <property type="antibodies" value="105 antibodies from 19 providers"/>
</dbReference>
<dbReference type="DNASU" id="67231"/>
<dbReference type="Ensembl" id="ENSMUST00000028963.14">
    <property type="protein sequence ID" value="ENSMUSP00000028963.8"/>
    <property type="gene ID" value="ENSMUSG00000027465.14"/>
</dbReference>
<dbReference type="GeneID" id="67231"/>
<dbReference type="KEGG" id="mmu:67231"/>
<dbReference type="UCSC" id="uc008nfb.1">
    <property type="organism name" value="mouse"/>
</dbReference>
<dbReference type="AGR" id="MGI:1914481"/>
<dbReference type="CTD" id="128637"/>
<dbReference type="MGI" id="MGI:1914481">
    <property type="gene designation" value="Tbc1d20"/>
</dbReference>
<dbReference type="VEuPathDB" id="HostDB:ENSMUSG00000027465"/>
<dbReference type="eggNOG" id="KOG2595">
    <property type="taxonomic scope" value="Eukaryota"/>
</dbReference>
<dbReference type="GeneTree" id="ENSGT00390000014944"/>
<dbReference type="HOGENOM" id="CLU_039465_1_0_1"/>
<dbReference type="InParanoid" id="Q9D9I4"/>
<dbReference type="OMA" id="VYMFAQI"/>
<dbReference type="OrthoDB" id="206700at2759"/>
<dbReference type="PhylomeDB" id="Q9D9I4"/>
<dbReference type="TreeFam" id="TF105942"/>
<dbReference type="Reactome" id="R-MMU-204005">
    <property type="pathway name" value="COPII-mediated vesicle transport"/>
</dbReference>
<dbReference type="BioGRID-ORCS" id="67231">
    <property type="hits" value="11 hits in 78 CRISPR screens"/>
</dbReference>
<dbReference type="PRO" id="PR:Q9D9I4"/>
<dbReference type="Proteomes" id="UP000000589">
    <property type="component" value="Chromosome 2"/>
</dbReference>
<dbReference type="RNAct" id="Q9D9I4">
    <property type="molecule type" value="protein"/>
</dbReference>
<dbReference type="Bgee" id="ENSMUSG00000027465">
    <property type="expression patterns" value="Expressed in brown adipose tissue and 261 other cell types or tissues"/>
</dbReference>
<dbReference type="ExpressionAtlas" id="Q9D9I4">
    <property type="expression patterns" value="baseline and differential"/>
</dbReference>
<dbReference type="GO" id="GO:0005789">
    <property type="term" value="C:endoplasmic reticulum membrane"/>
    <property type="evidence" value="ECO:0007669"/>
    <property type="project" value="Ensembl"/>
</dbReference>
<dbReference type="GO" id="GO:0000139">
    <property type="term" value="C:Golgi membrane"/>
    <property type="evidence" value="ECO:0007669"/>
    <property type="project" value="Ensembl"/>
</dbReference>
<dbReference type="GO" id="GO:0031965">
    <property type="term" value="C:nuclear membrane"/>
    <property type="evidence" value="ECO:0007669"/>
    <property type="project" value="Ensembl"/>
</dbReference>
<dbReference type="GO" id="GO:0005096">
    <property type="term" value="F:GTPase activator activity"/>
    <property type="evidence" value="ECO:0000315"/>
    <property type="project" value="UniProtKB"/>
</dbReference>
<dbReference type="GO" id="GO:0031267">
    <property type="term" value="F:small GTPase binding"/>
    <property type="evidence" value="ECO:0007669"/>
    <property type="project" value="Ensembl"/>
</dbReference>
<dbReference type="GO" id="GO:0001675">
    <property type="term" value="P:acrosome assembly"/>
    <property type="evidence" value="ECO:0000315"/>
    <property type="project" value="MGI"/>
</dbReference>
<dbReference type="GO" id="GO:0043010">
    <property type="term" value="P:camera-type eye development"/>
    <property type="evidence" value="ECO:0000315"/>
    <property type="project" value="MGI"/>
</dbReference>
<dbReference type="GO" id="GO:0090110">
    <property type="term" value="P:COPII-coated vesicle cargo loading"/>
    <property type="evidence" value="ECO:0007669"/>
    <property type="project" value="Ensembl"/>
</dbReference>
<dbReference type="GO" id="GO:0007030">
    <property type="term" value="P:Golgi organization"/>
    <property type="evidence" value="ECO:0000315"/>
    <property type="project" value="MGI"/>
</dbReference>
<dbReference type="GO" id="GO:0002088">
    <property type="term" value="P:lens development in camera-type eye"/>
    <property type="evidence" value="ECO:0000315"/>
    <property type="project" value="MGI"/>
</dbReference>
<dbReference type="GO" id="GO:0070309">
    <property type="term" value="P:lens fiber cell morphogenesis"/>
    <property type="evidence" value="ECO:0000315"/>
    <property type="project" value="MGI"/>
</dbReference>
<dbReference type="GO" id="GO:0034389">
    <property type="term" value="P:lipid droplet organization"/>
    <property type="evidence" value="ECO:0000315"/>
    <property type="project" value="MGI"/>
</dbReference>
<dbReference type="GO" id="GO:0008584">
    <property type="term" value="P:male gonad development"/>
    <property type="evidence" value="ECO:0000315"/>
    <property type="project" value="MGI"/>
</dbReference>
<dbReference type="GO" id="GO:0044829">
    <property type="term" value="P:positive regulation by host of viral genome replication"/>
    <property type="evidence" value="ECO:0007669"/>
    <property type="project" value="Ensembl"/>
</dbReference>
<dbReference type="GO" id="GO:0046726">
    <property type="term" value="P:positive regulation by virus of viral protein levels in host cell"/>
    <property type="evidence" value="ECO:0007669"/>
    <property type="project" value="Ensembl"/>
</dbReference>
<dbReference type="GO" id="GO:1902953">
    <property type="term" value="P:positive regulation of ER to Golgi vesicle-mediated transport"/>
    <property type="evidence" value="ECO:0007669"/>
    <property type="project" value="Ensembl"/>
</dbReference>
<dbReference type="GO" id="GO:0072520">
    <property type="term" value="P:seminiferous tubule development"/>
    <property type="evidence" value="ECO:0000315"/>
    <property type="project" value="MGI"/>
</dbReference>
<dbReference type="GO" id="GO:0007283">
    <property type="term" value="P:spermatogenesis"/>
    <property type="evidence" value="ECO:0000315"/>
    <property type="project" value="MGI"/>
</dbReference>
<dbReference type="GO" id="GO:0019068">
    <property type="term" value="P:virion assembly"/>
    <property type="evidence" value="ECO:0007669"/>
    <property type="project" value="Ensembl"/>
</dbReference>
<dbReference type="FunFam" id="1.10.472.80:FF:000024">
    <property type="entry name" value="TBC1 domain family member 20"/>
    <property type="match status" value="1"/>
</dbReference>
<dbReference type="FunFam" id="1.10.8.1310:FF:000001">
    <property type="entry name" value="TBC1 domain family, member 20"/>
    <property type="match status" value="1"/>
</dbReference>
<dbReference type="Gene3D" id="1.10.8.1310">
    <property type="match status" value="1"/>
</dbReference>
<dbReference type="Gene3D" id="1.10.472.80">
    <property type="entry name" value="Ypt/Rab-GAP domain of gyp1p, domain 3"/>
    <property type="match status" value="1"/>
</dbReference>
<dbReference type="InterPro" id="IPR000195">
    <property type="entry name" value="Rab-GAP-TBC_dom"/>
</dbReference>
<dbReference type="InterPro" id="IPR035969">
    <property type="entry name" value="Rab-GAP_TBC_sf"/>
</dbReference>
<dbReference type="InterPro" id="IPR045913">
    <property type="entry name" value="TBC20/Gyp8-like"/>
</dbReference>
<dbReference type="PANTHER" id="PTHR20913:SF10">
    <property type="entry name" value="TBC1 DOMAIN FAMILY MEMBER 20"/>
    <property type="match status" value="1"/>
</dbReference>
<dbReference type="PANTHER" id="PTHR20913">
    <property type="entry name" value="TBC1 DOMAIN FAMILY MEMBER 20/GTPASE"/>
    <property type="match status" value="1"/>
</dbReference>
<dbReference type="Pfam" id="PF00566">
    <property type="entry name" value="RabGAP-TBC"/>
    <property type="match status" value="1"/>
</dbReference>
<dbReference type="SMART" id="SM00164">
    <property type="entry name" value="TBC"/>
    <property type="match status" value="1"/>
</dbReference>
<dbReference type="SUPFAM" id="SSF47923">
    <property type="entry name" value="Ypt/Rab-GAP domain of gyp1p"/>
    <property type="match status" value="2"/>
</dbReference>
<dbReference type="PROSITE" id="PS50086">
    <property type="entry name" value="TBC_RABGAP"/>
    <property type="match status" value="1"/>
</dbReference>